<evidence type="ECO:0000255" key="1">
    <source>
        <dbReference type="HAMAP-Rule" id="MF_01434"/>
    </source>
</evidence>
<evidence type="ECO:0007829" key="2">
    <source>
        <dbReference type="PDB" id="3VMQ"/>
    </source>
</evidence>
<evidence type="ECO:0007829" key="3">
    <source>
        <dbReference type="PDB" id="3VMS"/>
    </source>
</evidence>
<evidence type="ECO:0007829" key="4">
    <source>
        <dbReference type="PDB" id="3VMT"/>
    </source>
</evidence>
<evidence type="ECO:0007829" key="5">
    <source>
        <dbReference type="PDB" id="5ZZK"/>
    </source>
</evidence>
<dbReference type="EC" id="2.4.99.28" evidence="1"/>
<dbReference type="EMBL" id="BA000017">
    <property type="protein sequence ID" value="BAB58036.1"/>
    <property type="molecule type" value="Genomic_DNA"/>
</dbReference>
<dbReference type="PDB" id="3VMQ">
    <property type="method" value="X-ray"/>
    <property type="resolution" value="2.52 A"/>
    <property type="chains" value="A/B=28-269"/>
</dbReference>
<dbReference type="PDB" id="3VMR">
    <property type="method" value="X-ray"/>
    <property type="resolution" value="3.69 A"/>
    <property type="chains" value="A=28-269"/>
</dbReference>
<dbReference type="PDB" id="3VMS">
    <property type="method" value="X-ray"/>
    <property type="resolution" value="3.20 A"/>
    <property type="chains" value="A/B=28-269"/>
</dbReference>
<dbReference type="PDB" id="3VMT">
    <property type="method" value="X-ray"/>
    <property type="resolution" value="2.30 A"/>
    <property type="chains" value="A/B=28-269"/>
</dbReference>
<dbReference type="PDB" id="5ZZK">
    <property type="method" value="X-ray"/>
    <property type="resolution" value="2.64 A"/>
    <property type="chains" value="A=28-269"/>
</dbReference>
<dbReference type="PDBsum" id="3VMQ"/>
<dbReference type="PDBsum" id="3VMR"/>
<dbReference type="PDBsum" id="3VMS"/>
<dbReference type="PDBsum" id="3VMT"/>
<dbReference type="PDBsum" id="5ZZK"/>
<dbReference type="SMR" id="Q99T05"/>
<dbReference type="CAZy" id="GT51">
    <property type="family name" value="Glycosyltransferase Family 51"/>
</dbReference>
<dbReference type="KEGG" id="sav:SAV1874"/>
<dbReference type="HOGENOM" id="CLU_006354_1_2_9"/>
<dbReference type="PhylomeDB" id="Q99T05"/>
<dbReference type="UniPathway" id="UPA00219"/>
<dbReference type="EvolutionaryTrace" id="Q99T05"/>
<dbReference type="Proteomes" id="UP000002481">
    <property type="component" value="Chromosome"/>
</dbReference>
<dbReference type="GO" id="GO:0030288">
    <property type="term" value="C:outer membrane-bounded periplasmic space"/>
    <property type="evidence" value="ECO:0007669"/>
    <property type="project" value="TreeGrafter"/>
</dbReference>
<dbReference type="GO" id="GO:0005886">
    <property type="term" value="C:plasma membrane"/>
    <property type="evidence" value="ECO:0007669"/>
    <property type="project" value="UniProtKB-SubCell"/>
</dbReference>
<dbReference type="GO" id="GO:0008955">
    <property type="term" value="F:peptidoglycan glycosyltransferase activity"/>
    <property type="evidence" value="ECO:0007669"/>
    <property type="project" value="UniProtKB-UniRule"/>
</dbReference>
<dbReference type="GO" id="GO:0071555">
    <property type="term" value="P:cell wall organization"/>
    <property type="evidence" value="ECO:0007669"/>
    <property type="project" value="UniProtKB-KW"/>
</dbReference>
<dbReference type="GO" id="GO:0009252">
    <property type="term" value="P:peptidoglycan biosynthetic process"/>
    <property type="evidence" value="ECO:0007669"/>
    <property type="project" value="UniProtKB-UniRule"/>
</dbReference>
<dbReference type="GO" id="GO:0008360">
    <property type="term" value="P:regulation of cell shape"/>
    <property type="evidence" value="ECO:0007669"/>
    <property type="project" value="UniProtKB-KW"/>
</dbReference>
<dbReference type="Gene3D" id="1.10.3810.10">
    <property type="entry name" value="Biosynthetic peptidoglycan transglycosylase-like"/>
    <property type="match status" value="1"/>
</dbReference>
<dbReference type="HAMAP" id="MF_01434">
    <property type="entry name" value="MGT"/>
    <property type="match status" value="1"/>
</dbReference>
<dbReference type="InterPro" id="IPR001264">
    <property type="entry name" value="Glyco_trans_51"/>
</dbReference>
<dbReference type="InterPro" id="IPR050396">
    <property type="entry name" value="Glycosyltr_51/Transpeptidase"/>
</dbReference>
<dbReference type="InterPro" id="IPR023346">
    <property type="entry name" value="Lysozyme-like_dom_sf"/>
</dbReference>
<dbReference type="InterPro" id="IPR022978">
    <property type="entry name" value="Monofunct_glyco_trans"/>
</dbReference>
<dbReference type="InterPro" id="IPR036950">
    <property type="entry name" value="PBP_transglycosylase"/>
</dbReference>
<dbReference type="NCBIfam" id="NF010008">
    <property type="entry name" value="PRK13481.1"/>
    <property type="match status" value="1"/>
</dbReference>
<dbReference type="PANTHER" id="PTHR32282">
    <property type="entry name" value="BINDING PROTEIN TRANSPEPTIDASE, PUTATIVE-RELATED"/>
    <property type="match status" value="1"/>
</dbReference>
<dbReference type="PANTHER" id="PTHR32282:SF11">
    <property type="entry name" value="PENICILLIN-BINDING PROTEIN 1B"/>
    <property type="match status" value="1"/>
</dbReference>
<dbReference type="Pfam" id="PF00912">
    <property type="entry name" value="Transgly"/>
    <property type="match status" value="1"/>
</dbReference>
<dbReference type="SUPFAM" id="SSF53955">
    <property type="entry name" value="Lysozyme-like"/>
    <property type="match status" value="1"/>
</dbReference>
<comment type="function">
    <text evidence="1">Peptidoglycan polymerase that catalyzes glycan chain elongation using lipid-linked disaccharide-pentapeptide as the substrate.</text>
</comment>
<comment type="catalytic activity">
    <reaction evidence="1">
        <text>[GlcNAc-(1-&gt;4)-Mur2Ac(oyl-L-Ala-gamma-D-Glu-L-Lys-D-Ala-D-Ala)](n)-di-trans,octa-cis-undecaprenyl diphosphate + beta-D-GlcNAc-(1-&gt;4)-Mur2Ac(oyl-L-Ala-gamma-D-Glu-L-Lys-D-Ala-D-Ala)-di-trans,octa-cis-undecaprenyl diphosphate = [GlcNAc-(1-&gt;4)-Mur2Ac(oyl-L-Ala-gamma-D-Glu-L-Lys-D-Ala-D-Ala)](n+1)-di-trans,octa-cis-undecaprenyl diphosphate + di-trans,octa-cis-undecaprenyl diphosphate + H(+)</text>
        <dbReference type="Rhea" id="RHEA:23708"/>
        <dbReference type="Rhea" id="RHEA-COMP:9602"/>
        <dbReference type="Rhea" id="RHEA-COMP:9603"/>
        <dbReference type="ChEBI" id="CHEBI:15378"/>
        <dbReference type="ChEBI" id="CHEBI:58405"/>
        <dbReference type="ChEBI" id="CHEBI:60033"/>
        <dbReference type="ChEBI" id="CHEBI:78435"/>
        <dbReference type="EC" id="2.4.99.28"/>
    </reaction>
</comment>
<comment type="pathway">
    <text evidence="1">Cell wall biogenesis; peptidoglycan biosynthesis.</text>
</comment>
<comment type="subcellular location">
    <subcellularLocation>
        <location evidence="1">Cell membrane</location>
        <topology evidence="1">Single-pass membrane protein</topology>
    </subcellularLocation>
</comment>
<comment type="similarity">
    <text evidence="1">Belongs to the glycosyltransferase 51 family.</text>
</comment>
<accession>Q99T05</accession>
<sequence length="269" mass="31460">MKRSDRYSNSNEHFEHMKHEPHYNTYYQPVGKPPKKKKSKRILLKILLTILIIIALFIGIMYFLSTRDNVDELRKIENKSSFVSADNMPEYVKGAFISMEDERFYNHHGFDLKGTTRALFSTISDRDVQGGSTITQQVVKNYFYDNDRSFTRKVKELFVAHRVEKQYNKNEILSFYLNNIYFGDNQYTLEGAANHYFGTTVNKNSTTMSHITVLQSAILASKVNAPSVYNINNMSENFTQRVSTNLEKMKQQNYINETQYQQAMSQLNR</sequence>
<reference key="1">
    <citation type="journal article" date="2001" name="Lancet">
        <title>Whole genome sequencing of meticillin-resistant Staphylococcus aureus.</title>
        <authorList>
            <person name="Kuroda M."/>
            <person name="Ohta T."/>
            <person name="Uchiyama I."/>
            <person name="Baba T."/>
            <person name="Yuzawa H."/>
            <person name="Kobayashi I."/>
            <person name="Cui L."/>
            <person name="Oguchi A."/>
            <person name="Aoki K."/>
            <person name="Nagai Y."/>
            <person name="Lian J.-Q."/>
            <person name="Ito T."/>
            <person name="Kanamori M."/>
            <person name="Matsumaru H."/>
            <person name="Maruyama A."/>
            <person name="Murakami H."/>
            <person name="Hosoyama A."/>
            <person name="Mizutani-Ui Y."/>
            <person name="Takahashi N.K."/>
            <person name="Sawano T."/>
            <person name="Inoue R."/>
            <person name="Kaito C."/>
            <person name="Sekimizu K."/>
            <person name="Hirakawa H."/>
            <person name="Kuhara S."/>
            <person name="Goto S."/>
            <person name="Yabuzaki J."/>
            <person name="Kanehisa M."/>
            <person name="Yamashita A."/>
            <person name="Oshima K."/>
            <person name="Furuya K."/>
            <person name="Yoshino C."/>
            <person name="Shiba T."/>
            <person name="Hattori M."/>
            <person name="Ogasawara N."/>
            <person name="Hayashi H."/>
            <person name="Hiramatsu K."/>
        </authorList>
    </citation>
    <scope>NUCLEOTIDE SEQUENCE [LARGE SCALE GENOMIC DNA]</scope>
    <source>
        <strain>Mu50 / ATCC 700699</strain>
    </source>
</reference>
<proteinExistence type="evidence at protein level"/>
<feature type="chain" id="PRO_0000083154" description="Monofunctional glycosyltransferase">
    <location>
        <begin position="1"/>
        <end position="269"/>
    </location>
</feature>
<feature type="transmembrane region" description="Helical" evidence="1">
    <location>
        <begin position="46"/>
        <end position="66"/>
    </location>
</feature>
<feature type="helix" evidence="4">
    <location>
        <begin position="45"/>
        <end position="65"/>
    </location>
</feature>
<feature type="helix" evidence="4">
    <location>
        <begin position="70"/>
        <end position="78"/>
    </location>
</feature>
<feature type="helix" evidence="4">
    <location>
        <begin position="85"/>
        <end position="87"/>
    </location>
</feature>
<feature type="helix" evidence="4">
    <location>
        <begin position="90"/>
        <end position="100"/>
    </location>
</feature>
<feature type="turn" evidence="4">
    <location>
        <begin position="102"/>
        <end position="106"/>
    </location>
</feature>
<feature type="strand" evidence="4">
    <location>
        <begin position="107"/>
        <end position="109"/>
    </location>
</feature>
<feature type="helix" evidence="4">
    <location>
        <begin position="112"/>
        <end position="116"/>
    </location>
</feature>
<feature type="turn" evidence="4">
    <location>
        <begin position="117"/>
        <end position="120"/>
    </location>
</feature>
<feature type="helix" evidence="4">
    <location>
        <begin position="134"/>
        <end position="143"/>
    </location>
</feature>
<feature type="helix" evidence="4">
    <location>
        <begin position="151"/>
        <end position="166"/>
    </location>
</feature>
<feature type="helix" evidence="4">
    <location>
        <begin position="169"/>
        <end position="177"/>
    </location>
</feature>
<feature type="strand" evidence="3">
    <location>
        <begin position="183"/>
        <end position="185"/>
    </location>
</feature>
<feature type="helix" evidence="4">
    <location>
        <begin position="189"/>
        <end position="197"/>
    </location>
</feature>
<feature type="strand" evidence="2">
    <location>
        <begin position="206"/>
        <end position="208"/>
    </location>
</feature>
<feature type="helix" evidence="4">
    <location>
        <begin position="213"/>
        <end position="222"/>
    </location>
</feature>
<feature type="helix" evidence="5">
    <location>
        <begin position="231"/>
        <end position="233"/>
    </location>
</feature>
<feature type="helix" evidence="4">
    <location>
        <begin position="236"/>
        <end position="251"/>
    </location>
</feature>
<feature type="helix" evidence="4">
    <location>
        <begin position="257"/>
        <end position="266"/>
    </location>
</feature>
<protein>
    <recommendedName>
        <fullName evidence="1">Monofunctional glycosyltransferase</fullName>
        <shortName evidence="1">MGT</shortName>
        <ecNumber evidence="1">2.4.99.28</ecNumber>
    </recommendedName>
    <alternativeName>
        <fullName evidence="1">Peptidoglycan TGase</fullName>
    </alternativeName>
</protein>
<name>MGT_STAAM</name>
<gene>
    <name evidence="1" type="primary">mgt</name>
    <name type="ordered locus">SAV1874</name>
</gene>
<organism>
    <name type="scientific">Staphylococcus aureus (strain Mu50 / ATCC 700699)</name>
    <dbReference type="NCBI Taxonomy" id="158878"/>
    <lineage>
        <taxon>Bacteria</taxon>
        <taxon>Bacillati</taxon>
        <taxon>Bacillota</taxon>
        <taxon>Bacilli</taxon>
        <taxon>Bacillales</taxon>
        <taxon>Staphylococcaceae</taxon>
        <taxon>Staphylococcus</taxon>
    </lineage>
</organism>
<keyword id="KW-0002">3D-structure</keyword>
<keyword id="KW-1003">Cell membrane</keyword>
<keyword id="KW-0133">Cell shape</keyword>
<keyword id="KW-0961">Cell wall biogenesis/degradation</keyword>
<keyword id="KW-0328">Glycosyltransferase</keyword>
<keyword id="KW-0472">Membrane</keyword>
<keyword id="KW-0573">Peptidoglycan synthesis</keyword>
<keyword id="KW-0808">Transferase</keyword>
<keyword id="KW-0812">Transmembrane</keyword>
<keyword id="KW-1133">Transmembrane helix</keyword>